<sequence length="95" mass="10454">MKTTLDLPDELMRAIKVRAAQQGRKMKDVVTELLRSGLSQTHSGAPIPTPRRVQLPLVHCGGAATREQEMTPERVAAALLDQEAQWWSGHDDAAL</sequence>
<keyword id="KW-1185">Reference proteome</keyword>
<keyword id="KW-1277">Toxin-antitoxin system</keyword>
<evidence type="ECO:0000250" key="1"/>
<comment type="function">
    <text evidence="1">Antitoxin component of a type II toxin-antitoxin (TA) system.</text>
</comment>
<dbReference type="EMBL" id="AE000516">
    <property type="protein sequence ID" value="AAK46992.1"/>
    <property type="molecule type" value="Genomic_DNA"/>
</dbReference>
<dbReference type="RefSeq" id="WP_003413456.1">
    <property type="nucleotide sequence ID" value="NZ_KK341227.1"/>
</dbReference>
<dbReference type="SMR" id="P9WJ20"/>
<dbReference type="KEGG" id="mtc:MT2676"/>
<dbReference type="PATRIC" id="fig|83331.31.peg.2886"/>
<dbReference type="HOGENOM" id="CLU_2588607_0_0_11"/>
<dbReference type="Proteomes" id="UP000001020">
    <property type="component" value="Chromosome"/>
</dbReference>
<dbReference type="GO" id="GO:0006355">
    <property type="term" value="P:regulation of DNA-templated transcription"/>
    <property type="evidence" value="ECO:0007669"/>
    <property type="project" value="InterPro"/>
</dbReference>
<dbReference type="Gene3D" id="1.10.1220.10">
    <property type="entry name" value="Met repressor-like"/>
    <property type="match status" value="1"/>
</dbReference>
<dbReference type="InterPro" id="IPR013321">
    <property type="entry name" value="Arc_rbn_hlx_hlx"/>
</dbReference>
<dbReference type="InterPro" id="IPR010985">
    <property type="entry name" value="Ribbon_hlx_hlx"/>
</dbReference>
<dbReference type="SUPFAM" id="SSF47598">
    <property type="entry name" value="Ribbon-helix-helix"/>
    <property type="match status" value="1"/>
</dbReference>
<accession>P9WJ20</accession>
<accession>L0TCV8</accession>
<accession>Q79FC7</accession>
<accession>Q8VJF3</accession>
<organism>
    <name type="scientific">Mycobacterium tuberculosis (strain CDC 1551 / Oshkosh)</name>
    <dbReference type="NCBI Taxonomy" id="83331"/>
    <lineage>
        <taxon>Bacteria</taxon>
        <taxon>Bacillati</taxon>
        <taxon>Actinomycetota</taxon>
        <taxon>Actinomycetes</taxon>
        <taxon>Mycobacteriales</taxon>
        <taxon>Mycobacteriaceae</taxon>
        <taxon>Mycobacterium</taxon>
        <taxon>Mycobacterium tuberculosis complex</taxon>
    </lineage>
</organism>
<gene>
    <name type="primary">vapB41</name>
    <name type="ordered locus">MT2676</name>
</gene>
<reference key="1">
    <citation type="journal article" date="2002" name="J. Bacteriol.">
        <title>Whole-genome comparison of Mycobacterium tuberculosis clinical and laboratory strains.</title>
        <authorList>
            <person name="Fleischmann R.D."/>
            <person name="Alland D."/>
            <person name="Eisen J.A."/>
            <person name="Carpenter L."/>
            <person name="White O."/>
            <person name="Peterson J.D."/>
            <person name="DeBoy R.T."/>
            <person name="Dodson R.J."/>
            <person name="Gwinn M.L."/>
            <person name="Haft D.H."/>
            <person name="Hickey E.K."/>
            <person name="Kolonay J.F."/>
            <person name="Nelson W.C."/>
            <person name="Umayam L.A."/>
            <person name="Ermolaeva M.D."/>
            <person name="Salzberg S.L."/>
            <person name="Delcher A."/>
            <person name="Utterback T.R."/>
            <person name="Weidman J.F."/>
            <person name="Khouri H.M."/>
            <person name="Gill J."/>
            <person name="Mikula A."/>
            <person name="Bishai W."/>
            <person name="Jacobs W.R. Jr."/>
            <person name="Venter J.C."/>
            <person name="Fraser C.M."/>
        </authorList>
    </citation>
    <scope>NUCLEOTIDE SEQUENCE [LARGE SCALE GENOMIC DNA]</scope>
    <source>
        <strain>CDC 1551 / Oshkosh</strain>
    </source>
</reference>
<proteinExistence type="inferred from homology"/>
<name>VPB41_MYCTO</name>
<feature type="chain" id="PRO_0000427906" description="Antitoxin VapB41">
    <location>
        <begin position="1"/>
        <end position="95"/>
    </location>
</feature>
<protein>
    <recommendedName>
        <fullName>Antitoxin VapB41</fullName>
    </recommendedName>
</protein>